<reference key="1">
    <citation type="journal article" date="2008" name="Appl. Environ. Microbiol.">
        <title>The genome of Polaromonas sp. strain JS666: insights into the evolution of a hydrocarbon- and xenobiotic-degrading bacterium, and features of relevance to biotechnology.</title>
        <authorList>
            <person name="Mattes T.E."/>
            <person name="Alexander A.K."/>
            <person name="Richardson P.M."/>
            <person name="Munk A.C."/>
            <person name="Han C.S."/>
            <person name="Stothard P."/>
            <person name="Coleman N.V."/>
        </authorList>
    </citation>
    <scope>NUCLEOTIDE SEQUENCE [LARGE SCALE GENOMIC DNA]</scope>
    <source>
        <strain>JS666 / ATCC BAA-500</strain>
    </source>
</reference>
<accession>Q12GQ1</accession>
<organism>
    <name type="scientific">Polaromonas sp. (strain JS666 / ATCC BAA-500)</name>
    <dbReference type="NCBI Taxonomy" id="296591"/>
    <lineage>
        <taxon>Bacteria</taxon>
        <taxon>Pseudomonadati</taxon>
        <taxon>Pseudomonadota</taxon>
        <taxon>Betaproteobacteria</taxon>
        <taxon>Burkholderiales</taxon>
        <taxon>Comamonadaceae</taxon>
        <taxon>Polaromonas</taxon>
    </lineage>
</organism>
<name>ATPG_POLSJ</name>
<keyword id="KW-0066">ATP synthesis</keyword>
<keyword id="KW-0997">Cell inner membrane</keyword>
<keyword id="KW-1003">Cell membrane</keyword>
<keyword id="KW-0139">CF(1)</keyword>
<keyword id="KW-0375">Hydrogen ion transport</keyword>
<keyword id="KW-0406">Ion transport</keyword>
<keyword id="KW-0472">Membrane</keyword>
<keyword id="KW-1185">Reference proteome</keyword>
<keyword id="KW-0813">Transport</keyword>
<proteinExistence type="inferred from homology"/>
<evidence type="ECO:0000255" key="1">
    <source>
        <dbReference type="HAMAP-Rule" id="MF_00815"/>
    </source>
</evidence>
<sequence length="288" mass="31244">MAAGKEIRGKIKSVENTKKITKAMEMVAASKMRKAQERMRAARPYSDKIRNVAANLSQANPEYTHAFMESNDAKATGFIVVTTDKGLCGGLNTNVLRAVTSKLKDLQAAGHDALAVAIGNKGLGFLNRVGAKVVSHATQLGDKPHLEKLIGPVKVLLDAYSEGKINAVYLCYTKFINTMRQEPVVEQLLPLTAAHLQADKDQHGWDYIYEPDAQTVIDDLLLRYVEALIYQAVAENMASEQSARMVAMKAATDNAGSVIGELKLIYNKTRQAAITKELSEIVAGAAAV</sequence>
<gene>
    <name evidence="1" type="primary">atpG</name>
    <name type="ordered locus">Bpro_0326</name>
</gene>
<dbReference type="EMBL" id="CP000316">
    <property type="protein sequence ID" value="ABE42291.1"/>
    <property type="molecule type" value="Genomic_DNA"/>
</dbReference>
<dbReference type="RefSeq" id="WP_011481298.1">
    <property type="nucleotide sequence ID" value="NC_007948.1"/>
</dbReference>
<dbReference type="SMR" id="Q12GQ1"/>
<dbReference type="STRING" id="296591.Bpro_0326"/>
<dbReference type="KEGG" id="pol:Bpro_0326"/>
<dbReference type="eggNOG" id="COG0224">
    <property type="taxonomic scope" value="Bacteria"/>
</dbReference>
<dbReference type="HOGENOM" id="CLU_050669_0_1_4"/>
<dbReference type="OrthoDB" id="9812769at2"/>
<dbReference type="Proteomes" id="UP000001983">
    <property type="component" value="Chromosome"/>
</dbReference>
<dbReference type="GO" id="GO:0005886">
    <property type="term" value="C:plasma membrane"/>
    <property type="evidence" value="ECO:0007669"/>
    <property type="project" value="UniProtKB-SubCell"/>
</dbReference>
<dbReference type="GO" id="GO:0045259">
    <property type="term" value="C:proton-transporting ATP synthase complex"/>
    <property type="evidence" value="ECO:0007669"/>
    <property type="project" value="UniProtKB-KW"/>
</dbReference>
<dbReference type="GO" id="GO:0005524">
    <property type="term" value="F:ATP binding"/>
    <property type="evidence" value="ECO:0007669"/>
    <property type="project" value="UniProtKB-UniRule"/>
</dbReference>
<dbReference type="GO" id="GO:0046933">
    <property type="term" value="F:proton-transporting ATP synthase activity, rotational mechanism"/>
    <property type="evidence" value="ECO:0007669"/>
    <property type="project" value="UniProtKB-UniRule"/>
</dbReference>
<dbReference type="GO" id="GO:0042777">
    <property type="term" value="P:proton motive force-driven plasma membrane ATP synthesis"/>
    <property type="evidence" value="ECO:0007669"/>
    <property type="project" value="UniProtKB-UniRule"/>
</dbReference>
<dbReference type="CDD" id="cd12151">
    <property type="entry name" value="F1-ATPase_gamma"/>
    <property type="match status" value="1"/>
</dbReference>
<dbReference type="FunFam" id="1.10.287.80:FF:000005">
    <property type="entry name" value="ATP synthase gamma chain"/>
    <property type="match status" value="1"/>
</dbReference>
<dbReference type="Gene3D" id="3.40.1380.10">
    <property type="match status" value="1"/>
</dbReference>
<dbReference type="Gene3D" id="1.10.287.80">
    <property type="entry name" value="ATP synthase, gamma subunit, helix hairpin domain"/>
    <property type="match status" value="1"/>
</dbReference>
<dbReference type="HAMAP" id="MF_00815">
    <property type="entry name" value="ATP_synth_gamma_bact"/>
    <property type="match status" value="1"/>
</dbReference>
<dbReference type="InterPro" id="IPR035968">
    <property type="entry name" value="ATP_synth_F1_ATPase_gsu"/>
</dbReference>
<dbReference type="InterPro" id="IPR000131">
    <property type="entry name" value="ATP_synth_F1_gsu"/>
</dbReference>
<dbReference type="InterPro" id="IPR023632">
    <property type="entry name" value="ATP_synth_F1_gsu_CS"/>
</dbReference>
<dbReference type="NCBIfam" id="TIGR01146">
    <property type="entry name" value="ATPsyn_F1gamma"/>
    <property type="match status" value="1"/>
</dbReference>
<dbReference type="NCBIfam" id="NF004144">
    <property type="entry name" value="PRK05621.1-1"/>
    <property type="match status" value="1"/>
</dbReference>
<dbReference type="PANTHER" id="PTHR11693">
    <property type="entry name" value="ATP SYNTHASE GAMMA CHAIN"/>
    <property type="match status" value="1"/>
</dbReference>
<dbReference type="PANTHER" id="PTHR11693:SF22">
    <property type="entry name" value="ATP SYNTHASE SUBUNIT GAMMA, MITOCHONDRIAL"/>
    <property type="match status" value="1"/>
</dbReference>
<dbReference type="Pfam" id="PF00231">
    <property type="entry name" value="ATP-synt"/>
    <property type="match status" value="1"/>
</dbReference>
<dbReference type="PRINTS" id="PR00126">
    <property type="entry name" value="ATPASEGAMMA"/>
</dbReference>
<dbReference type="SUPFAM" id="SSF52943">
    <property type="entry name" value="ATP synthase (F1-ATPase), gamma subunit"/>
    <property type="match status" value="1"/>
</dbReference>
<dbReference type="PROSITE" id="PS00153">
    <property type="entry name" value="ATPASE_GAMMA"/>
    <property type="match status" value="1"/>
</dbReference>
<feature type="chain" id="PRO_1000053281" description="ATP synthase gamma chain">
    <location>
        <begin position="1"/>
        <end position="288"/>
    </location>
</feature>
<protein>
    <recommendedName>
        <fullName evidence="1">ATP synthase gamma chain</fullName>
    </recommendedName>
    <alternativeName>
        <fullName evidence="1">ATP synthase F1 sector gamma subunit</fullName>
    </alternativeName>
    <alternativeName>
        <fullName evidence="1">F-ATPase gamma subunit</fullName>
    </alternativeName>
</protein>
<comment type="function">
    <text evidence="1">Produces ATP from ADP in the presence of a proton gradient across the membrane. The gamma chain is believed to be important in regulating ATPase activity and the flow of protons through the CF(0) complex.</text>
</comment>
<comment type="subunit">
    <text evidence="1">F-type ATPases have 2 components, CF(1) - the catalytic core - and CF(0) - the membrane proton channel. CF(1) has five subunits: alpha(3), beta(3), gamma(1), delta(1), epsilon(1). CF(0) has three main subunits: a, b and c.</text>
</comment>
<comment type="subcellular location">
    <subcellularLocation>
        <location evidence="1">Cell inner membrane</location>
        <topology evidence="1">Peripheral membrane protein</topology>
    </subcellularLocation>
</comment>
<comment type="similarity">
    <text evidence="1">Belongs to the ATPase gamma chain family.</text>
</comment>